<organism>
    <name type="scientific">Streptomyces coelicolor (strain ATCC BAA-471 / A3(2) / M145)</name>
    <dbReference type="NCBI Taxonomy" id="100226"/>
    <lineage>
        <taxon>Bacteria</taxon>
        <taxon>Bacillati</taxon>
        <taxon>Actinomycetota</taxon>
        <taxon>Actinomycetes</taxon>
        <taxon>Kitasatosporales</taxon>
        <taxon>Streptomycetaceae</taxon>
        <taxon>Streptomyces</taxon>
        <taxon>Streptomyces albidoflavus group</taxon>
    </lineage>
</organism>
<name>LEU3_STRCO</name>
<reference key="1">
    <citation type="journal article" date="2002" name="Nature">
        <title>Complete genome sequence of the model actinomycete Streptomyces coelicolor A3(2).</title>
        <authorList>
            <person name="Bentley S.D."/>
            <person name="Chater K.F."/>
            <person name="Cerdeno-Tarraga A.-M."/>
            <person name="Challis G.L."/>
            <person name="Thomson N.R."/>
            <person name="James K.D."/>
            <person name="Harris D.E."/>
            <person name="Quail M.A."/>
            <person name="Kieser H."/>
            <person name="Harper D."/>
            <person name="Bateman A."/>
            <person name="Brown S."/>
            <person name="Chandra G."/>
            <person name="Chen C.W."/>
            <person name="Collins M."/>
            <person name="Cronin A."/>
            <person name="Fraser A."/>
            <person name="Goble A."/>
            <person name="Hidalgo J."/>
            <person name="Hornsby T."/>
            <person name="Howarth S."/>
            <person name="Huang C.-H."/>
            <person name="Kieser T."/>
            <person name="Larke L."/>
            <person name="Murphy L.D."/>
            <person name="Oliver K."/>
            <person name="O'Neil S."/>
            <person name="Rabbinowitsch E."/>
            <person name="Rajandream M.A."/>
            <person name="Rutherford K.M."/>
            <person name="Rutter S."/>
            <person name="Seeger K."/>
            <person name="Saunders D."/>
            <person name="Sharp S."/>
            <person name="Squares R."/>
            <person name="Squares S."/>
            <person name="Taylor K."/>
            <person name="Warren T."/>
            <person name="Wietzorrek A."/>
            <person name="Woodward J.R."/>
            <person name="Barrell B.G."/>
            <person name="Parkhill J."/>
            <person name="Hopwood D.A."/>
        </authorList>
    </citation>
    <scope>NUCLEOTIDE SEQUENCE [LARGE SCALE GENOMIC DNA]</scope>
    <source>
        <strain>ATCC BAA-471 / A3(2) / M145</strain>
    </source>
</reference>
<dbReference type="EC" id="1.1.1.85" evidence="1"/>
<dbReference type="EMBL" id="AL939124">
    <property type="protein sequence ID" value="CAA19970.1"/>
    <property type="molecule type" value="Genomic_DNA"/>
</dbReference>
<dbReference type="PIR" id="T29052">
    <property type="entry name" value="T29052"/>
</dbReference>
<dbReference type="RefSeq" id="NP_629656.1">
    <property type="nucleotide sequence ID" value="NC_003888.3"/>
</dbReference>
<dbReference type="RefSeq" id="WP_011030290.1">
    <property type="nucleotide sequence ID" value="NZ_VNID01000011.1"/>
</dbReference>
<dbReference type="SMR" id="O86504"/>
<dbReference type="FunCoup" id="O86504">
    <property type="interactions" value="440"/>
</dbReference>
<dbReference type="STRING" id="100226.gene:17763174"/>
<dbReference type="PaxDb" id="100226-SCO5522"/>
<dbReference type="KEGG" id="sco:SCO5522"/>
<dbReference type="PATRIC" id="fig|100226.15.peg.5609"/>
<dbReference type="eggNOG" id="COG0473">
    <property type="taxonomic scope" value="Bacteria"/>
</dbReference>
<dbReference type="HOGENOM" id="CLU_031953_0_1_11"/>
<dbReference type="InParanoid" id="O86504"/>
<dbReference type="OrthoDB" id="5289857at2"/>
<dbReference type="PhylomeDB" id="O86504"/>
<dbReference type="UniPathway" id="UPA00048">
    <property type="reaction ID" value="UER00072"/>
</dbReference>
<dbReference type="Proteomes" id="UP000001973">
    <property type="component" value="Chromosome"/>
</dbReference>
<dbReference type="GO" id="GO:0005737">
    <property type="term" value="C:cytoplasm"/>
    <property type="evidence" value="ECO:0007669"/>
    <property type="project" value="UniProtKB-SubCell"/>
</dbReference>
<dbReference type="GO" id="GO:0003862">
    <property type="term" value="F:3-isopropylmalate dehydrogenase activity"/>
    <property type="evidence" value="ECO:0007669"/>
    <property type="project" value="UniProtKB-UniRule"/>
</dbReference>
<dbReference type="GO" id="GO:0000287">
    <property type="term" value="F:magnesium ion binding"/>
    <property type="evidence" value="ECO:0007669"/>
    <property type="project" value="InterPro"/>
</dbReference>
<dbReference type="GO" id="GO:0051287">
    <property type="term" value="F:NAD binding"/>
    <property type="evidence" value="ECO:0007669"/>
    <property type="project" value="InterPro"/>
</dbReference>
<dbReference type="GO" id="GO:0009098">
    <property type="term" value="P:L-leucine biosynthetic process"/>
    <property type="evidence" value="ECO:0007669"/>
    <property type="project" value="UniProtKB-UniRule"/>
</dbReference>
<dbReference type="Gene3D" id="3.40.718.10">
    <property type="entry name" value="Isopropylmalate Dehydrogenase"/>
    <property type="match status" value="1"/>
</dbReference>
<dbReference type="HAMAP" id="MF_01035">
    <property type="entry name" value="LeuB_type2"/>
    <property type="match status" value="1"/>
</dbReference>
<dbReference type="InterPro" id="IPR050501">
    <property type="entry name" value="ICDH/IPMDH"/>
</dbReference>
<dbReference type="InterPro" id="IPR019818">
    <property type="entry name" value="IsoCit/isopropylmalate_DH_CS"/>
</dbReference>
<dbReference type="InterPro" id="IPR024084">
    <property type="entry name" value="IsoPropMal-DH-like_dom"/>
</dbReference>
<dbReference type="InterPro" id="IPR023698">
    <property type="entry name" value="LeuB_actb"/>
</dbReference>
<dbReference type="NCBIfam" id="NF002898">
    <property type="entry name" value="PRK03437.1"/>
    <property type="match status" value="1"/>
</dbReference>
<dbReference type="PANTHER" id="PTHR43275">
    <property type="entry name" value="D-MALATE DEHYDROGENASE [DECARBOXYLATING]"/>
    <property type="match status" value="1"/>
</dbReference>
<dbReference type="PANTHER" id="PTHR43275:SF1">
    <property type="entry name" value="D-MALATE DEHYDROGENASE [DECARBOXYLATING]"/>
    <property type="match status" value="1"/>
</dbReference>
<dbReference type="Pfam" id="PF00180">
    <property type="entry name" value="Iso_dh"/>
    <property type="match status" value="1"/>
</dbReference>
<dbReference type="SMART" id="SM01329">
    <property type="entry name" value="Iso_dh"/>
    <property type="match status" value="1"/>
</dbReference>
<dbReference type="SUPFAM" id="SSF53659">
    <property type="entry name" value="Isocitrate/Isopropylmalate dehydrogenase-like"/>
    <property type="match status" value="1"/>
</dbReference>
<dbReference type="PROSITE" id="PS00470">
    <property type="entry name" value="IDH_IMDH"/>
    <property type="match status" value="1"/>
</dbReference>
<proteinExistence type="inferred from homology"/>
<accession>O86504</accession>
<comment type="function">
    <text evidence="1">Catalyzes the oxidation of 3-carboxy-2-hydroxy-4-methylpentanoate (3-isopropylmalate) to 3-carboxy-4-methyl-2-oxopentanoate. The product decarboxylates to 4-methyl-2 oxopentanoate.</text>
</comment>
<comment type="catalytic activity">
    <reaction evidence="1">
        <text>(2R,3S)-3-isopropylmalate + NAD(+) = 4-methyl-2-oxopentanoate + CO2 + NADH</text>
        <dbReference type="Rhea" id="RHEA:32271"/>
        <dbReference type="ChEBI" id="CHEBI:16526"/>
        <dbReference type="ChEBI" id="CHEBI:17865"/>
        <dbReference type="ChEBI" id="CHEBI:35121"/>
        <dbReference type="ChEBI" id="CHEBI:57540"/>
        <dbReference type="ChEBI" id="CHEBI:57945"/>
        <dbReference type="EC" id="1.1.1.85"/>
    </reaction>
</comment>
<comment type="cofactor">
    <cofactor evidence="1">
        <name>Mg(2+)</name>
        <dbReference type="ChEBI" id="CHEBI:18420"/>
    </cofactor>
    <cofactor evidence="1">
        <name>Mn(2+)</name>
        <dbReference type="ChEBI" id="CHEBI:29035"/>
    </cofactor>
    <text evidence="1">Binds 1 Mg(2+) or Mn(2+) ion per subunit.</text>
</comment>
<comment type="pathway">
    <text evidence="1">Amino-acid biosynthesis; L-leucine biosynthesis; L-leucine from 3-methyl-2-oxobutanoate: step 3/4.</text>
</comment>
<comment type="subunit">
    <text evidence="1">Homodimer.</text>
</comment>
<comment type="subcellular location">
    <subcellularLocation>
        <location evidence="1">Cytoplasm</location>
    </subcellularLocation>
</comment>
<comment type="similarity">
    <text evidence="1">Belongs to the isocitrate and isopropylmalate dehydrogenases family. LeuB type 2 subfamily.</text>
</comment>
<protein>
    <recommendedName>
        <fullName evidence="1">3-isopropylmalate dehydrogenase</fullName>
        <ecNumber evidence="1">1.1.1.85</ecNumber>
    </recommendedName>
    <alternativeName>
        <fullName evidence="1">3-IPM-DH</fullName>
    </alternativeName>
    <alternativeName>
        <fullName evidence="1">Beta-IPM dehydrogenase</fullName>
        <shortName evidence="1">IMDH</shortName>
    </alternativeName>
</protein>
<feature type="chain" id="PRO_0000083806" description="3-isopropylmalate dehydrogenase">
    <location>
        <begin position="1"/>
        <end position="347"/>
    </location>
</feature>
<feature type="binding site" evidence="1">
    <location>
        <position position="94"/>
    </location>
    <ligand>
        <name>substrate</name>
    </ligand>
</feature>
<feature type="binding site" evidence="1">
    <location>
        <position position="104"/>
    </location>
    <ligand>
        <name>substrate</name>
    </ligand>
</feature>
<feature type="binding site" evidence="1">
    <location>
        <position position="128"/>
    </location>
    <ligand>
        <name>substrate</name>
    </ligand>
</feature>
<feature type="binding site" evidence="1">
    <location>
        <position position="219"/>
    </location>
    <ligand>
        <name>Mg(2+)</name>
        <dbReference type="ChEBI" id="CHEBI:18420"/>
    </ligand>
</feature>
<feature type="binding site" evidence="1">
    <location>
        <position position="219"/>
    </location>
    <ligand>
        <name>substrate</name>
    </ligand>
</feature>
<feature type="binding site" evidence="1">
    <location>
        <position position="243"/>
    </location>
    <ligand>
        <name>Mg(2+)</name>
        <dbReference type="ChEBI" id="CHEBI:18420"/>
    </ligand>
</feature>
<feature type="binding site" evidence="1">
    <location>
        <position position="247"/>
    </location>
    <ligand>
        <name>Mg(2+)</name>
        <dbReference type="ChEBI" id="CHEBI:18420"/>
    </ligand>
</feature>
<feature type="binding site" evidence="1">
    <location>
        <begin position="279"/>
        <end position="291"/>
    </location>
    <ligand>
        <name>NAD(+)</name>
        <dbReference type="ChEBI" id="CHEBI:57540"/>
    </ligand>
</feature>
<feature type="site" description="Important for catalysis" evidence="1">
    <location>
        <position position="135"/>
    </location>
</feature>
<feature type="site" description="Important for catalysis" evidence="1">
    <location>
        <position position="186"/>
    </location>
</feature>
<sequence>MSRSLNLAVIPGDGIGQEVVAEGLKVLSAVLPQDVKLETKEFDFGARRYHATGETLTDADLDALKAHDAILLGAIGDPSVPSGVLERGFLLKLRFAFDHHVNLRPSKLLPGVATPLAGQPEIDFVVVREGTEGPYTGNGGTIRKGTEHEVATEVSVNTAYGVERVVRDAFARAQARPRKKLTLVHKNNVLTFAGHLWTNIFNKVAAEYPEVTTDYLHVDAATIFLVTDPARFDVIVTDNLFGDIITDLAAAVSGGIGVAASGNINPSGDFPSMFEPVHGSAPDIAGQGKADPTATVLSVALLLRHLGYEDEAARIEDAVSADLGERGDLPARSTSEIGDTLAARVAG</sequence>
<evidence type="ECO:0000255" key="1">
    <source>
        <dbReference type="HAMAP-Rule" id="MF_01035"/>
    </source>
</evidence>
<gene>
    <name evidence="1" type="primary">leuB</name>
    <name type="ordered locus">SCO5522</name>
    <name type="ORF">SC1C2.03</name>
</gene>
<keyword id="KW-0028">Amino-acid biosynthesis</keyword>
<keyword id="KW-0100">Branched-chain amino acid biosynthesis</keyword>
<keyword id="KW-0963">Cytoplasm</keyword>
<keyword id="KW-0432">Leucine biosynthesis</keyword>
<keyword id="KW-0460">Magnesium</keyword>
<keyword id="KW-0464">Manganese</keyword>
<keyword id="KW-0479">Metal-binding</keyword>
<keyword id="KW-0520">NAD</keyword>
<keyword id="KW-0560">Oxidoreductase</keyword>
<keyword id="KW-1185">Reference proteome</keyword>